<accession>P0AF86</accession>
<accession>P39307</accession>
<accession>Q2M6A6</accession>
<feature type="signal peptide" evidence="1">
    <location>
        <begin position="1"/>
        <end position="20"/>
    </location>
</feature>
<feature type="chain" id="PRO_0000013941" description="Uncharacterized protein YjfY">
    <location>
        <begin position="21"/>
        <end position="91"/>
    </location>
</feature>
<reference key="1">
    <citation type="journal article" date="1995" name="Nucleic Acids Res.">
        <title>Analysis of the Escherichia coli genome VI: DNA sequence of the region from 92.8 through 100 minutes.</title>
        <authorList>
            <person name="Burland V.D."/>
            <person name="Plunkett G. III"/>
            <person name="Sofia H.J."/>
            <person name="Daniels D.L."/>
            <person name="Blattner F.R."/>
        </authorList>
    </citation>
    <scope>NUCLEOTIDE SEQUENCE [LARGE SCALE GENOMIC DNA]</scope>
    <source>
        <strain>K12 / MG1655 / ATCC 47076</strain>
    </source>
</reference>
<reference key="2">
    <citation type="journal article" date="1997" name="Science">
        <title>The complete genome sequence of Escherichia coli K-12.</title>
        <authorList>
            <person name="Blattner F.R."/>
            <person name="Plunkett G. III"/>
            <person name="Bloch C.A."/>
            <person name="Perna N.T."/>
            <person name="Burland V."/>
            <person name="Riley M."/>
            <person name="Collado-Vides J."/>
            <person name="Glasner J.D."/>
            <person name="Rode C.K."/>
            <person name="Mayhew G.F."/>
            <person name="Gregor J."/>
            <person name="Davis N.W."/>
            <person name="Kirkpatrick H.A."/>
            <person name="Goeden M.A."/>
            <person name="Rose D.J."/>
            <person name="Mau B."/>
            <person name="Shao Y."/>
        </authorList>
    </citation>
    <scope>NUCLEOTIDE SEQUENCE [LARGE SCALE GENOMIC DNA]</scope>
    <source>
        <strain>K12 / MG1655 / ATCC 47076</strain>
    </source>
</reference>
<reference key="3">
    <citation type="journal article" date="2006" name="Mol. Syst. Biol.">
        <title>Highly accurate genome sequences of Escherichia coli K-12 strains MG1655 and W3110.</title>
        <authorList>
            <person name="Hayashi K."/>
            <person name="Morooka N."/>
            <person name="Yamamoto Y."/>
            <person name="Fujita K."/>
            <person name="Isono K."/>
            <person name="Choi S."/>
            <person name="Ohtsubo E."/>
            <person name="Baba T."/>
            <person name="Wanner B.L."/>
            <person name="Mori H."/>
            <person name="Horiuchi T."/>
        </authorList>
    </citation>
    <scope>NUCLEOTIDE SEQUENCE [LARGE SCALE GENOMIC DNA]</scope>
    <source>
        <strain>K12 / W3110 / ATCC 27325 / DSM 5911</strain>
    </source>
</reference>
<sequence length="91" mass="10149">MFSRVLALLAVLLLSANTWAAIEINNHQARNMDDVQSLGVIYINHNFATESEARQALNEETDAQGATYYHVILMREPGSNGNMHASADIYR</sequence>
<protein>
    <recommendedName>
        <fullName>Uncharacterized protein YjfY</fullName>
    </recommendedName>
</protein>
<dbReference type="EMBL" id="U14003">
    <property type="protein sequence ID" value="AAA97095.1"/>
    <property type="molecule type" value="Genomic_DNA"/>
</dbReference>
<dbReference type="EMBL" id="U00096">
    <property type="protein sequence ID" value="AAC77156.1"/>
    <property type="molecule type" value="Genomic_DNA"/>
</dbReference>
<dbReference type="EMBL" id="AP009048">
    <property type="protein sequence ID" value="BAE78200.1"/>
    <property type="molecule type" value="Genomic_DNA"/>
</dbReference>
<dbReference type="PIR" id="S56424">
    <property type="entry name" value="S56424"/>
</dbReference>
<dbReference type="RefSeq" id="NP_418620.1">
    <property type="nucleotide sequence ID" value="NC_000913.3"/>
</dbReference>
<dbReference type="RefSeq" id="WP_000492914.1">
    <property type="nucleotide sequence ID" value="NZ_STEB01000013.1"/>
</dbReference>
<dbReference type="SMR" id="P0AF86"/>
<dbReference type="BioGRID" id="4262717">
    <property type="interactions" value="7"/>
</dbReference>
<dbReference type="FunCoup" id="P0AF86">
    <property type="interactions" value="13"/>
</dbReference>
<dbReference type="STRING" id="511145.b4199"/>
<dbReference type="PaxDb" id="511145-b4199"/>
<dbReference type="EnsemblBacteria" id="AAC77156">
    <property type="protein sequence ID" value="AAC77156"/>
    <property type="gene ID" value="b4199"/>
</dbReference>
<dbReference type="GeneID" id="93777624"/>
<dbReference type="GeneID" id="948713"/>
<dbReference type="KEGG" id="ecj:JW4157"/>
<dbReference type="KEGG" id="eco:b4199"/>
<dbReference type="KEGG" id="ecoc:C3026_22680"/>
<dbReference type="PATRIC" id="fig|511145.12.peg.4331"/>
<dbReference type="EchoBASE" id="EB2392"/>
<dbReference type="eggNOG" id="ENOG5032SRX">
    <property type="taxonomic scope" value="Bacteria"/>
</dbReference>
<dbReference type="HOGENOM" id="CLU_158602_0_0_6"/>
<dbReference type="InParanoid" id="P0AF86"/>
<dbReference type="OMA" id="PILIHEP"/>
<dbReference type="OrthoDB" id="6638498at2"/>
<dbReference type="PhylomeDB" id="P0AF86"/>
<dbReference type="BioCyc" id="EcoCyc:G7861-MONOMER"/>
<dbReference type="PRO" id="PR:P0AF86"/>
<dbReference type="Proteomes" id="UP000000625">
    <property type="component" value="Chromosome"/>
</dbReference>
<dbReference type="GO" id="GO:0042597">
    <property type="term" value="C:periplasmic space"/>
    <property type="evidence" value="ECO:0007669"/>
    <property type="project" value="UniProtKB-SubCell"/>
</dbReference>
<dbReference type="GO" id="GO:0006950">
    <property type="term" value="P:response to stress"/>
    <property type="evidence" value="ECO:0000318"/>
    <property type="project" value="GO_Central"/>
</dbReference>
<dbReference type="Gene3D" id="3.30.1660.10">
    <property type="entry name" value="Flavin-binding protein dodecin"/>
    <property type="match status" value="1"/>
</dbReference>
<dbReference type="InterPro" id="IPR051096">
    <property type="entry name" value="BhsA/McbA_stress_biofilm_assoc"/>
</dbReference>
<dbReference type="InterPro" id="IPR025543">
    <property type="entry name" value="Dodecin-like"/>
</dbReference>
<dbReference type="InterPro" id="IPR036275">
    <property type="entry name" value="YdgH-like_sf"/>
</dbReference>
<dbReference type="InterPro" id="IPR010854">
    <property type="entry name" value="YdgH/BhsA/McbA-like_dom"/>
</dbReference>
<dbReference type="PANTHER" id="PTHR34156:SF6">
    <property type="entry name" value="OUTER MEMBRANE PROTEIN"/>
    <property type="match status" value="1"/>
</dbReference>
<dbReference type="PANTHER" id="PTHR34156">
    <property type="entry name" value="OUTER MEMBRANE PROTEIN-RELATED-RELATED"/>
    <property type="match status" value="1"/>
</dbReference>
<dbReference type="Pfam" id="PF07338">
    <property type="entry name" value="YdgH_BhsA-like"/>
    <property type="match status" value="1"/>
</dbReference>
<dbReference type="SUPFAM" id="SSF159871">
    <property type="entry name" value="YdgH-like"/>
    <property type="match status" value="1"/>
</dbReference>
<keyword id="KW-0574">Periplasm</keyword>
<keyword id="KW-1185">Reference proteome</keyword>
<keyword id="KW-0732">Signal</keyword>
<evidence type="ECO:0000255" key="1"/>
<evidence type="ECO:0000305" key="2"/>
<comment type="subcellular location">
    <subcellularLocation>
        <location evidence="2">Periplasm</location>
    </subcellularLocation>
</comment>
<comment type="similarity">
    <text evidence="2">Belongs to the BhsA/McbA family.</text>
</comment>
<proteinExistence type="inferred from homology"/>
<gene>
    <name type="primary">yjfY</name>
    <name type="ordered locus">b4199</name>
    <name type="ordered locus">JW4157</name>
</gene>
<organism>
    <name type="scientific">Escherichia coli (strain K12)</name>
    <dbReference type="NCBI Taxonomy" id="83333"/>
    <lineage>
        <taxon>Bacteria</taxon>
        <taxon>Pseudomonadati</taxon>
        <taxon>Pseudomonadota</taxon>
        <taxon>Gammaproteobacteria</taxon>
        <taxon>Enterobacterales</taxon>
        <taxon>Enterobacteriaceae</taxon>
        <taxon>Escherichia</taxon>
    </lineage>
</organism>
<name>YJFY_ECOLI</name>